<gene>
    <name type="primary">OR1P1</name>
    <name type="synonym">OR1P1P</name>
</gene>
<keyword id="KW-1003">Cell membrane</keyword>
<keyword id="KW-1015">Disulfide bond</keyword>
<keyword id="KW-0297">G-protein coupled receptor</keyword>
<keyword id="KW-0325">Glycoprotein</keyword>
<keyword id="KW-0472">Membrane</keyword>
<keyword id="KW-0552">Olfaction</keyword>
<keyword id="KW-0675">Receptor</keyword>
<keyword id="KW-1185">Reference proteome</keyword>
<keyword id="KW-0716">Sensory transduction</keyword>
<keyword id="KW-0807">Transducer</keyword>
<keyword id="KW-0812">Transmembrane</keyword>
<keyword id="KW-1133">Transmembrane helix</keyword>
<organism>
    <name type="scientific">Homo sapiens</name>
    <name type="common">Human</name>
    <dbReference type="NCBI Taxonomy" id="9606"/>
    <lineage>
        <taxon>Eukaryota</taxon>
        <taxon>Metazoa</taxon>
        <taxon>Chordata</taxon>
        <taxon>Craniata</taxon>
        <taxon>Vertebrata</taxon>
        <taxon>Euteleostomi</taxon>
        <taxon>Mammalia</taxon>
        <taxon>Eutheria</taxon>
        <taxon>Euarchontoglires</taxon>
        <taxon>Primates</taxon>
        <taxon>Haplorrhini</taxon>
        <taxon>Catarrhini</taxon>
        <taxon>Hominidae</taxon>
        <taxon>Homo</taxon>
    </lineage>
</organism>
<protein>
    <recommendedName>
        <fullName>Olfactory receptor 1P1</fullName>
    </recommendedName>
    <alternativeName>
        <fullName>Olfactory receptor 17-208</fullName>
        <shortName>OR17-208</shortName>
    </alternativeName>
    <alternativeName>
        <fullName>Olfactory receptor OR17-9</fullName>
    </alternativeName>
</protein>
<proteinExistence type="inferred from homology"/>
<sequence length="330" mass="36695">MGLTQDFFPPTSELLEGGNQTSTFEFLLWGLSDQPQQQHIFFLLFLWMYVVTVAGNLLIVLAIGTDTHLHTPMYFFLASLSCADIFSTSTTVPKALVNIQTQSRSISYAGCLAQLYFFLTFGDMDIFLPATMAYDRYVAICHLLHYMMIMSLHRCAFLVTACWTLTSLLAMTRTFLIFRLSLCSKILPGFFCDLGPLMKVSCSDAQVNELVLLFLGGAVILIPFMLILVSYIRIVSAILRAPSAQGRRKAFSTCDSHLVVVALFFGTVIRAYLCPSSSSSNSVKEDTAAAVMYTVVTPLLNPFIYSMRNKDMKAAVVRLLKGRVSFSQGQ</sequence>
<comment type="function">
    <text evidence="3">Odorant receptor.</text>
</comment>
<comment type="subcellular location">
    <subcellularLocation>
        <location>Cell membrane</location>
        <topology>Multi-pass membrane protein</topology>
    </subcellularLocation>
</comment>
<comment type="polymorphism">
    <text>A stop codon in the gene coding for this protein at position Lys-185 is responsible for functional diversity thus producing a pseudogene. The stop codon is more frequent in non-Africans than in African-Americans.</text>
</comment>
<comment type="similarity">
    <text evidence="2">Belongs to the G-protein coupled receptor 1 family.</text>
</comment>
<comment type="online information" name="Human Olfactory Receptor Data Exploratorium (HORDE)">
    <link uri="http://genome.weizmann.ac.il/horde/card/index/symbol:OR1P1P"/>
</comment>
<reference key="1">
    <citation type="journal article" date="2000" name="Genomics">
        <title>Sequence, structure, and evolution of a complete human olfactory receptor gene cluster.</title>
        <authorList>
            <person name="Glusman G."/>
            <person name="Sosinsky A."/>
            <person name="Ben-Asher E."/>
            <person name="Avidan N."/>
            <person name="Sonkin D."/>
            <person name="Bahar A."/>
            <person name="Rosenthal A."/>
            <person name="Clifton S."/>
            <person name="Roe B."/>
            <person name="Ferraz C."/>
            <person name="Demaille J.G."/>
            <person name="Lancet D."/>
        </authorList>
    </citation>
    <scope>NUCLEOTIDE SEQUENCE [GENOMIC DNA]</scope>
</reference>
<reference key="2">
    <citation type="submission" date="2001-07" db="EMBL/GenBank/DDBJ databases">
        <title>Genome-wide discovery and analysis of human seven transmembrane helix receptor genes.</title>
        <authorList>
            <person name="Suwa M."/>
            <person name="Sato T."/>
            <person name="Okouchi I."/>
            <person name="Arita M."/>
            <person name="Futami K."/>
            <person name="Matsumoto S."/>
            <person name="Tsutsumi S."/>
            <person name="Aburatani H."/>
            <person name="Asai K."/>
            <person name="Akiyama Y."/>
        </authorList>
    </citation>
    <scope>NUCLEOTIDE SEQUENCE [GENOMIC DNA]</scope>
</reference>
<reference key="3">
    <citation type="journal article" date="2006" name="Nature">
        <title>DNA sequence of human chromosome 17 and analysis of rearrangement in the human lineage.</title>
        <authorList>
            <person name="Zody M.C."/>
            <person name="Garber M."/>
            <person name="Adams D.J."/>
            <person name="Sharpe T."/>
            <person name="Harrow J."/>
            <person name="Lupski J.R."/>
            <person name="Nicholson C."/>
            <person name="Searle S.M."/>
            <person name="Wilming L."/>
            <person name="Young S.K."/>
            <person name="Abouelleil A."/>
            <person name="Allen N.R."/>
            <person name="Bi W."/>
            <person name="Bloom T."/>
            <person name="Borowsky M.L."/>
            <person name="Bugalter B.E."/>
            <person name="Butler J."/>
            <person name="Chang J.L."/>
            <person name="Chen C.-K."/>
            <person name="Cook A."/>
            <person name="Corum B."/>
            <person name="Cuomo C.A."/>
            <person name="de Jong P.J."/>
            <person name="DeCaprio D."/>
            <person name="Dewar K."/>
            <person name="FitzGerald M."/>
            <person name="Gilbert J."/>
            <person name="Gibson R."/>
            <person name="Gnerre S."/>
            <person name="Goldstein S."/>
            <person name="Grafham D.V."/>
            <person name="Grocock R."/>
            <person name="Hafez N."/>
            <person name="Hagopian D.S."/>
            <person name="Hart E."/>
            <person name="Norman C.H."/>
            <person name="Humphray S."/>
            <person name="Jaffe D.B."/>
            <person name="Jones M."/>
            <person name="Kamal M."/>
            <person name="Khodiyar V.K."/>
            <person name="LaButti K."/>
            <person name="Laird G."/>
            <person name="Lehoczky J."/>
            <person name="Liu X."/>
            <person name="Lokyitsang T."/>
            <person name="Loveland J."/>
            <person name="Lui A."/>
            <person name="Macdonald P."/>
            <person name="Major J.E."/>
            <person name="Matthews L."/>
            <person name="Mauceli E."/>
            <person name="McCarroll S.A."/>
            <person name="Mihalev A.H."/>
            <person name="Mudge J."/>
            <person name="Nguyen C."/>
            <person name="Nicol R."/>
            <person name="O'Leary S.B."/>
            <person name="Osoegawa K."/>
            <person name="Schwartz D.C."/>
            <person name="Shaw-Smith C."/>
            <person name="Stankiewicz P."/>
            <person name="Steward C."/>
            <person name="Swarbreck D."/>
            <person name="Venkataraman V."/>
            <person name="Whittaker C.A."/>
            <person name="Yang X."/>
            <person name="Zimmer A.R."/>
            <person name="Bradley A."/>
            <person name="Hubbard T."/>
            <person name="Birren B.W."/>
            <person name="Rogers J."/>
            <person name="Lander E.S."/>
            <person name="Nusbaum C."/>
        </authorList>
    </citation>
    <scope>NUCLEOTIDE SEQUENCE [LARGE SCALE GENOMIC DNA]</scope>
</reference>
<reference key="4">
    <citation type="journal article" date="2002" name="Genomics">
        <title>DEFOG: a practical scheme for deciphering families of genes.</title>
        <authorList>
            <person name="Fuchs T."/>
            <person name="Malecova B."/>
            <person name="Linhart C."/>
            <person name="Sharan R."/>
            <person name="Khen M."/>
            <person name="Herwig R."/>
            <person name="Shmulevich D."/>
            <person name="Elkon R."/>
            <person name="Steinfath M."/>
            <person name="O'Brien J.K."/>
            <person name="Radelof U."/>
            <person name="Lehrach H."/>
            <person name="Lancet D."/>
            <person name="Shamir R."/>
        </authorList>
    </citation>
    <scope>NUCLEOTIDE SEQUENCE [GENOMIC DNA] OF 102-196</scope>
</reference>
<reference key="5">
    <citation type="journal article" date="2004" name="Proc. Natl. Acad. Sci. U.S.A.">
        <title>The human olfactory receptor gene family.</title>
        <authorList>
            <person name="Malnic B."/>
            <person name="Godfrey P.A."/>
            <person name="Buck L.B."/>
        </authorList>
    </citation>
    <scope>IDENTIFICATION</scope>
</reference>
<reference key="6">
    <citation type="journal article" date="2004" name="Proc. Natl. Acad. Sci. U.S.A.">
        <authorList>
            <person name="Malnic B."/>
            <person name="Godfrey P.A."/>
            <person name="Buck L.B."/>
        </authorList>
    </citation>
    <scope>ERRATUM OF PUBMED:14983052</scope>
</reference>
<reference key="7">
    <citation type="journal article" date="2003" name="Nat. Genet.">
        <title>Different noses for different people.</title>
        <authorList>
            <person name="Menashe I."/>
            <person name="Man O."/>
            <person name="Lancet D."/>
            <person name="Gilad Y."/>
        </authorList>
    </citation>
    <scope>POLYMORPHISM</scope>
</reference>
<accession>Q8NH06</accession>
<name>OR1P1_HUMAN</name>
<evidence type="ECO:0000255" key="1"/>
<evidence type="ECO:0000255" key="2">
    <source>
        <dbReference type="PROSITE-ProRule" id="PRU00521"/>
    </source>
</evidence>
<evidence type="ECO:0000305" key="3"/>
<dbReference type="EMBL" id="AF087927">
    <property type="status" value="NOT_ANNOTATED_CDS"/>
    <property type="molecule type" value="Genomic_DNA"/>
</dbReference>
<dbReference type="EMBL" id="AB065608">
    <property type="protein sequence ID" value="BAC05835.1"/>
    <property type="status" value="ALT_SEQ"/>
    <property type="molecule type" value="Genomic_DNA"/>
</dbReference>
<dbReference type="EMBL" id="AF399436">
    <property type="status" value="NOT_ANNOTATED_CDS"/>
    <property type="molecule type" value="Genomic_DNA"/>
</dbReference>
<dbReference type="EMBL" id="BK004548">
    <property type="status" value="NOT_ANNOTATED_CDS"/>
    <property type="molecule type" value="Genomic_DNA"/>
</dbReference>
<dbReference type="SMR" id="Q8NH06"/>
<dbReference type="FunCoup" id="Q8NH06">
    <property type="interactions" value="711"/>
</dbReference>
<dbReference type="GlyCosmos" id="Q8NH06">
    <property type="glycosylation" value="1 site, No reported glycans"/>
</dbReference>
<dbReference type="GlyGen" id="Q8NH06">
    <property type="glycosylation" value="1 site"/>
</dbReference>
<dbReference type="BioMuta" id="OR1P1"/>
<dbReference type="DMDM" id="166215841"/>
<dbReference type="AGR" id="HGNC:8222"/>
<dbReference type="GeneCards" id="OR1P1"/>
<dbReference type="HGNC" id="HGNC:8222">
    <property type="gene designation" value="OR1P1"/>
</dbReference>
<dbReference type="neXtProt" id="NX_Q8NH06"/>
<dbReference type="InParanoid" id="Q8NH06"/>
<dbReference type="OrthoDB" id="9444602at2759"/>
<dbReference type="PAN-GO" id="Q8NH06">
    <property type="GO annotations" value="3 GO annotations based on evolutionary models"/>
</dbReference>
<dbReference type="PhylomeDB" id="Q8NH06"/>
<dbReference type="PathwayCommons" id="Q8NH06"/>
<dbReference type="Reactome" id="R-HSA-9752946">
    <property type="pathway name" value="Expression and translocation of olfactory receptors"/>
</dbReference>
<dbReference type="Pharos" id="Q8NH06">
    <property type="development level" value="Tdark"/>
</dbReference>
<dbReference type="PRO" id="PR:Q8NH06"/>
<dbReference type="Proteomes" id="UP000005640">
    <property type="component" value="Unplaced"/>
</dbReference>
<dbReference type="RNAct" id="Q8NH06">
    <property type="molecule type" value="protein"/>
</dbReference>
<dbReference type="GO" id="GO:0005886">
    <property type="term" value="C:plasma membrane"/>
    <property type="evidence" value="ECO:0000318"/>
    <property type="project" value="GO_Central"/>
</dbReference>
<dbReference type="GO" id="GO:0004930">
    <property type="term" value="F:G protein-coupled receptor activity"/>
    <property type="evidence" value="ECO:0007669"/>
    <property type="project" value="UniProtKB-KW"/>
</dbReference>
<dbReference type="GO" id="GO:0004984">
    <property type="term" value="F:olfactory receptor activity"/>
    <property type="evidence" value="ECO:0000318"/>
    <property type="project" value="GO_Central"/>
</dbReference>
<dbReference type="GO" id="GO:0007165">
    <property type="term" value="P:signal transduction"/>
    <property type="evidence" value="ECO:0000318"/>
    <property type="project" value="GO_Central"/>
</dbReference>
<dbReference type="CDD" id="cd15918">
    <property type="entry name" value="7tmA_OR1_7-like"/>
    <property type="match status" value="1"/>
</dbReference>
<dbReference type="FunFam" id="1.20.1070.10:FF:000009">
    <property type="entry name" value="Olfactory receptor"/>
    <property type="match status" value="1"/>
</dbReference>
<dbReference type="Gene3D" id="1.20.1070.10">
    <property type="entry name" value="Rhodopsin 7-helix transmembrane proteins"/>
    <property type="match status" value="1"/>
</dbReference>
<dbReference type="InterPro" id="IPR000276">
    <property type="entry name" value="GPCR_Rhodpsn"/>
</dbReference>
<dbReference type="InterPro" id="IPR017452">
    <property type="entry name" value="GPCR_Rhodpsn_7TM"/>
</dbReference>
<dbReference type="InterPro" id="IPR000725">
    <property type="entry name" value="Olfact_rcpt"/>
</dbReference>
<dbReference type="PANTHER" id="PTHR48001">
    <property type="entry name" value="OLFACTORY RECEPTOR"/>
    <property type="match status" value="1"/>
</dbReference>
<dbReference type="Pfam" id="PF13853">
    <property type="entry name" value="7tm_4"/>
    <property type="match status" value="1"/>
</dbReference>
<dbReference type="PRINTS" id="PR00237">
    <property type="entry name" value="GPCRRHODOPSN"/>
</dbReference>
<dbReference type="PRINTS" id="PR00245">
    <property type="entry name" value="OLFACTORYR"/>
</dbReference>
<dbReference type="SUPFAM" id="SSF81321">
    <property type="entry name" value="Family A G protein-coupled receptor-like"/>
    <property type="match status" value="1"/>
</dbReference>
<dbReference type="PROSITE" id="PS50262">
    <property type="entry name" value="G_PROTEIN_RECEP_F1_2"/>
    <property type="match status" value="1"/>
</dbReference>
<feature type="chain" id="PRO_0000314121" description="Olfactory receptor 1P1">
    <location>
        <begin position="1"/>
        <end position="330"/>
    </location>
</feature>
<feature type="topological domain" description="Extracellular" evidence="1">
    <location>
        <begin position="1"/>
        <end position="39"/>
    </location>
</feature>
<feature type="transmembrane region" description="Helical; Name=1" evidence="1">
    <location>
        <begin position="40"/>
        <end position="60"/>
    </location>
</feature>
<feature type="topological domain" description="Cytoplasmic" evidence="1">
    <location>
        <begin position="61"/>
        <end position="71"/>
    </location>
</feature>
<feature type="transmembrane region" description="Helical; Name=2" evidence="1">
    <location>
        <begin position="72"/>
        <end position="92"/>
    </location>
</feature>
<feature type="topological domain" description="Extracellular" evidence="1">
    <location>
        <begin position="93"/>
        <end position="111"/>
    </location>
</feature>
<feature type="transmembrane region" description="Helical; Name=3" evidence="1">
    <location>
        <begin position="112"/>
        <end position="132"/>
    </location>
</feature>
<feature type="topological domain" description="Cytoplasmic" evidence="1">
    <location>
        <begin position="133"/>
        <end position="137"/>
    </location>
</feature>
<feature type="transmembrane region" description="Helical; Name=4" evidence="1">
    <location>
        <begin position="138"/>
        <end position="158"/>
    </location>
</feature>
<feature type="topological domain" description="Extracellular" evidence="1">
    <location>
        <begin position="159"/>
        <end position="209"/>
    </location>
</feature>
<feature type="transmembrane region" description="Helical; Name=5" evidence="1">
    <location>
        <begin position="210"/>
        <end position="230"/>
    </location>
</feature>
<feature type="topological domain" description="Cytoplasmic" evidence="1">
    <location>
        <begin position="231"/>
        <end position="257"/>
    </location>
</feature>
<feature type="transmembrane region" description="Helical; Name=6" evidence="1">
    <location>
        <begin position="258"/>
        <end position="278"/>
    </location>
</feature>
<feature type="topological domain" description="Extracellular" evidence="1">
    <location>
        <begin position="279"/>
        <end position="286"/>
    </location>
</feature>
<feature type="transmembrane region" description="Helical; Name=7" evidence="1">
    <location>
        <begin position="287"/>
        <end position="307"/>
    </location>
</feature>
<feature type="topological domain" description="Cytoplasmic" evidence="1">
    <location>
        <begin position="308"/>
        <end position="330"/>
    </location>
</feature>
<feature type="glycosylation site" description="N-linked (GlcNAc...) asparagine" evidence="1">
    <location>
        <position position="19"/>
    </location>
</feature>
<feature type="disulfide bond" evidence="2">
    <location>
        <begin position="111"/>
        <end position="192"/>
    </location>
</feature>